<reference key="1">
    <citation type="journal article" date="1997" name="Science">
        <title>The complete genome sequence of Escherichia coli K-12.</title>
        <authorList>
            <person name="Blattner F.R."/>
            <person name="Plunkett G. III"/>
            <person name="Bloch C.A."/>
            <person name="Perna N.T."/>
            <person name="Burland V."/>
            <person name="Riley M."/>
            <person name="Collado-Vides J."/>
            <person name="Glasner J.D."/>
            <person name="Rode C.K."/>
            <person name="Mayhew G.F."/>
            <person name="Gregor J."/>
            <person name="Davis N.W."/>
            <person name="Kirkpatrick H.A."/>
            <person name="Goeden M.A."/>
            <person name="Rose D.J."/>
            <person name="Mau B."/>
            <person name="Shao Y."/>
        </authorList>
    </citation>
    <scope>NUCLEOTIDE SEQUENCE [LARGE SCALE GENOMIC DNA]</scope>
    <source>
        <strain>K12 / MG1655 / ATCC 47076</strain>
    </source>
</reference>
<reference key="2">
    <citation type="journal article" date="2006" name="Mol. Syst. Biol.">
        <title>Highly accurate genome sequences of Escherichia coli K-12 strains MG1655 and W3110.</title>
        <authorList>
            <person name="Hayashi K."/>
            <person name="Morooka N."/>
            <person name="Yamamoto Y."/>
            <person name="Fujita K."/>
            <person name="Isono K."/>
            <person name="Choi S."/>
            <person name="Ohtsubo E."/>
            <person name="Baba T."/>
            <person name="Wanner B.L."/>
            <person name="Mori H."/>
            <person name="Horiuchi T."/>
        </authorList>
    </citation>
    <scope>NUCLEOTIDE SEQUENCE [LARGE SCALE GENOMIC DNA]</scope>
    <source>
        <strain>K12 / W3110 / ATCC 27325 / DSM 5911</strain>
    </source>
</reference>
<reference key="3">
    <citation type="journal article" date="2000" name="Biochemistry">
        <title>Discovering new enzymes and metabolic pathways: conversion of succinate to propionate by Escherichia coli.</title>
        <authorList>
            <person name="Haller T."/>
            <person name="Buckel T."/>
            <person name="Retey J."/>
            <person name="Gerlt J.A."/>
        </authorList>
    </citation>
    <scope>FUNCTION</scope>
    <scope>CATALYTIC ACTIVITY</scope>
    <scope>BIOPHYSICOCHEMICAL PROPERTIES</scope>
    <source>
        <strain>K12 / MG1655 / ATCC 47076</strain>
    </source>
</reference>
<sequence length="492" mass="53824">METQWTRMTANEAAEIIQHNDMVAFSGFTPAGSPKALPTAIARRANEQHEAKKPYQIRLLTGASISAAADDVLSDADAVSWRAPYQTSSGLRKKINQGAVSFVDLHLSEVAQMVNYGFFGDIDVAVIEASALAPDGRVWLTSGIGNAPTWLLRAKKVIIELNHYHDPRVAELADIVIPGAPPRRNSVSIFHAMDRVGTRYVQIDPKKIVAVVETNLPDAGNMLDKQNPMCQQIADNVVTFLLQEMAHGRIPPEFLPLQSGVGNINNAVMARLGENPVIPPFMMYSEVLQESVVHLLETGKISGASASSLTISADSLRKIYDNMDYFASRIVLRPQEISNNPEIIRRLGVIALNVGLEFDIYGHANSTHVAGVDLMNGIGGSGDFERNAYLSIFMAPSIAKEGKISTVVPMCSHVDHSEHSVKVIITEQGIADLRGLSPLQRARTIIDNCAHPMYRDYLHRYLENAPGGHIHHDLSHVFDLHRNLIATGSMLG</sequence>
<protein>
    <recommendedName>
        <fullName evidence="4">Propanoyl-CoA:succinate CoA transferase</fullName>
        <ecNumber evidence="2">2.8.3.27</ecNumber>
    </recommendedName>
    <alternativeName>
        <fullName evidence="3">Propionyl CoA:succinate CoA transferase</fullName>
    </alternativeName>
</protein>
<organism>
    <name type="scientific">Escherichia coli (strain K12)</name>
    <dbReference type="NCBI Taxonomy" id="83333"/>
    <lineage>
        <taxon>Bacteria</taxon>
        <taxon>Pseudomonadati</taxon>
        <taxon>Pseudomonadota</taxon>
        <taxon>Gammaproteobacteria</taxon>
        <taxon>Enterobacterales</taxon>
        <taxon>Enterobacteriaceae</taxon>
        <taxon>Escherichia</taxon>
    </lineage>
</organism>
<keyword id="KW-1185">Reference proteome</keyword>
<keyword id="KW-0808">Transferase</keyword>
<proteinExistence type="evidence at protein level"/>
<name>SCPC_ECOLI</name>
<feature type="chain" id="PRO_0000215527" description="Propanoyl-CoA:succinate CoA transferase">
    <location>
        <begin position="1"/>
        <end position="492"/>
    </location>
</feature>
<feature type="active site" description="5-glutamyl coenzyme A thioester intermediate" evidence="1">
    <location>
        <position position="286"/>
    </location>
</feature>
<feature type="binding site" evidence="1">
    <location>
        <begin position="260"/>
        <end position="264"/>
    </location>
    <ligand>
        <name>CoA</name>
        <dbReference type="ChEBI" id="CHEBI:57287"/>
    </ligand>
</feature>
<feature type="binding site" evidence="1">
    <location>
        <position position="376"/>
    </location>
    <ligand>
        <name>CoA</name>
        <dbReference type="ChEBI" id="CHEBI:57287"/>
    </ligand>
</feature>
<feature type="binding site" evidence="1">
    <location>
        <position position="380"/>
    </location>
    <ligand>
        <name>CoA</name>
        <dbReference type="ChEBI" id="CHEBI:57287"/>
    </ligand>
</feature>
<evidence type="ECO:0000250" key="1">
    <source>
        <dbReference type="UniProtKB" id="B3EY95"/>
    </source>
</evidence>
<evidence type="ECO:0000269" key="2">
    <source>
    </source>
</evidence>
<evidence type="ECO:0000303" key="3">
    <source>
    </source>
</evidence>
<evidence type="ECO:0000305" key="4"/>
<evidence type="ECO:0000312" key="5">
    <source>
        <dbReference type="EMBL" id="AAC75957.1"/>
    </source>
</evidence>
<dbReference type="EC" id="2.8.3.27" evidence="2"/>
<dbReference type="EMBL" id="U28377">
    <property type="protein sequence ID" value="AAA69087.1"/>
    <property type="molecule type" value="Genomic_DNA"/>
</dbReference>
<dbReference type="EMBL" id="U00096">
    <property type="protein sequence ID" value="AAC75957.1"/>
    <property type="molecule type" value="Genomic_DNA"/>
</dbReference>
<dbReference type="EMBL" id="AP009048">
    <property type="protein sequence ID" value="BAE76984.1"/>
    <property type="molecule type" value="Genomic_DNA"/>
</dbReference>
<dbReference type="PIR" id="G65076">
    <property type="entry name" value="G65076"/>
</dbReference>
<dbReference type="RefSeq" id="NP_417395.1">
    <property type="nucleotide sequence ID" value="NC_000913.3"/>
</dbReference>
<dbReference type="RefSeq" id="WP_000449965.1">
    <property type="nucleotide sequence ID" value="NZ_SSZK01000003.1"/>
</dbReference>
<dbReference type="SMR" id="P52043"/>
<dbReference type="BioGRID" id="4262329">
    <property type="interactions" value="14"/>
</dbReference>
<dbReference type="DIP" id="DIP-12167N"/>
<dbReference type="FunCoup" id="P52043">
    <property type="interactions" value="353"/>
</dbReference>
<dbReference type="IntAct" id="P52043">
    <property type="interactions" value="9"/>
</dbReference>
<dbReference type="STRING" id="511145.b2920"/>
<dbReference type="PaxDb" id="511145-b2920"/>
<dbReference type="EnsemblBacteria" id="AAC75957">
    <property type="protein sequence ID" value="AAC75957"/>
    <property type="gene ID" value="b2920"/>
</dbReference>
<dbReference type="GeneID" id="947402"/>
<dbReference type="KEGG" id="ecj:JW2887"/>
<dbReference type="KEGG" id="eco:b2920"/>
<dbReference type="KEGG" id="ecoc:C3026_16000"/>
<dbReference type="PATRIC" id="fig|1411691.4.peg.3812"/>
<dbReference type="EchoBASE" id="EB2800"/>
<dbReference type="eggNOG" id="COG0427">
    <property type="taxonomic scope" value="Bacteria"/>
</dbReference>
<dbReference type="HOGENOM" id="CLU_019748_3_0_6"/>
<dbReference type="InParanoid" id="P52043"/>
<dbReference type="OMA" id="SCIVPMV"/>
<dbReference type="OrthoDB" id="9801795at2"/>
<dbReference type="PhylomeDB" id="P52043"/>
<dbReference type="BioCyc" id="EcoCyc:G7517-MONOMER"/>
<dbReference type="BioCyc" id="MetaCyc:G7517-MONOMER"/>
<dbReference type="PRO" id="PR:P52043"/>
<dbReference type="Proteomes" id="UP000000625">
    <property type="component" value="Chromosome"/>
</dbReference>
<dbReference type="GO" id="GO:0008775">
    <property type="term" value="F:acetate CoA-transferase activity"/>
    <property type="evidence" value="ECO:0000318"/>
    <property type="project" value="GO_Central"/>
</dbReference>
<dbReference type="GO" id="GO:0003986">
    <property type="term" value="F:acetyl-CoA hydrolase activity"/>
    <property type="evidence" value="ECO:0000318"/>
    <property type="project" value="GO_Central"/>
</dbReference>
<dbReference type="GO" id="GO:0043821">
    <property type="term" value="F:propionyl-CoA:succinate CoA-transferase activity"/>
    <property type="evidence" value="ECO:0000314"/>
    <property type="project" value="EcoCyc"/>
</dbReference>
<dbReference type="GO" id="GO:0006083">
    <property type="term" value="P:acetate metabolic process"/>
    <property type="evidence" value="ECO:0000318"/>
    <property type="project" value="GO_Central"/>
</dbReference>
<dbReference type="GO" id="GO:0006084">
    <property type="term" value="P:acetyl-CoA metabolic process"/>
    <property type="evidence" value="ECO:0007669"/>
    <property type="project" value="InterPro"/>
</dbReference>
<dbReference type="FunFam" id="3.40.1080.20:FF:000001">
    <property type="entry name" value="Acetyl-CoA hydrolase Ach1"/>
    <property type="match status" value="1"/>
</dbReference>
<dbReference type="Gene3D" id="3.40.1080.20">
    <property type="entry name" value="Acetyl-CoA hydrolase/transferase C-terminal domain"/>
    <property type="match status" value="1"/>
</dbReference>
<dbReference type="Gene3D" id="3.40.1080.10">
    <property type="entry name" value="Glutaconate Coenzyme A-transferase"/>
    <property type="match status" value="1"/>
</dbReference>
<dbReference type="InterPro" id="IPR026888">
    <property type="entry name" value="AcetylCoA_hyd_C"/>
</dbReference>
<dbReference type="InterPro" id="IPR038460">
    <property type="entry name" value="AcetylCoA_hyd_C_sf"/>
</dbReference>
<dbReference type="InterPro" id="IPR046433">
    <property type="entry name" value="ActCoA_hydro"/>
</dbReference>
<dbReference type="InterPro" id="IPR003702">
    <property type="entry name" value="ActCoA_hydro_N"/>
</dbReference>
<dbReference type="InterPro" id="IPR037171">
    <property type="entry name" value="NagB/RpiA_transferase-like"/>
</dbReference>
<dbReference type="InterPro" id="IPR017821">
    <property type="entry name" value="Succinate_CoA_transferase"/>
</dbReference>
<dbReference type="NCBIfam" id="TIGR03458">
    <property type="entry name" value="YgfH_subfam"/>
    <property type="match status" value="1"/>
</dbReference>
<dbReference type="PANTHER" id="PTHR43609">
    <property type="entry name" value="ACETYL-COA HYDROLASE"/>
    <property type="match status" value="1"/>
</dbReference>
<dbReference type="PANTHER" id="PTHR43609:SF1">
    <property type="entry name" value="ACETYL-COA HYDROLASE"/>
    <property type="match status" value="1"/>
</dbReference>
<dbReference type="Pfam" id="PF13336">
    <property type="entry name" value="AcetylCoA_hyd_C"/>
    <property type="match status" value="1"/>
</dbReference>
<dbReference type="Pfam" id="PF02550">
    <property type="entry name" value="AcetylCoA_hydro"/>
    <property type="match status" value="1"/>
</dbReference>
<dbReference type="SUPFAM" id="SSF100950">
    <property type="entry name" value="NagB/RpiA/CoA transferase-like"/>
    <property type="match status" value="2"/>
</dbReference>
<comment type="function">
    <text evidence="2">Catalyzes the transfer of coenzyme A from propionyl-CoA to succinate (PubMed:10769117). Could be part of a pathway that converts succinate to propionate (PubMed:10769117).</text>
</comment>
<comment type="catalytic activity">
    <reaction evidence="2">
        <text>propanoyl-CoA + succinate = propanoate + succinyl-CoA</text>
        <dbReference type="Rhea" id="RHEA:28010"/>
        <dbReference type="ChEBI" id="CHEBI:17272"/>
        <dbReference type="ChEBI" id="CHEBI:30031"/>
        <dbReference type="ChEBI" id="CHEBI:57292"/>
        <dbReference type="ChEBI" id="CHEBI:57392"/>
        <dbReference type="EC" id="2.8.3.27"/>
    </reaction>
</comment>
<comment type="biophysicochemical properties">
    <kinetics>
        <KM evidence="2">7.1 uM for propanoyl-CoA</KM>
        <text evidence="2">kcat is 0.72 sec(-1) with propanoyl-CoA as substrate.</text>
    </kinetics>
</comment>
<comment type="similarity">
    <text evidence="4">Belongs to the acetyl-CoA hydrolase/transferase family.</text>
</comment>
<gene>
    <name evidence="5" type="primary">scpC</name>
    <name type="synonym">ygfH</name>
    <name type="ordered locus">b2920</name>
    <name type="ordered locus">JW2887</name>
</gene>
<accession>P52043</accession>
<accession>Q2M9S2</accession>